<reference key="1">
    <citation type="journal article" date="2005" name="Nat. Biotechnol.">
        <title>Complete genome sequence of the plant commensal Pseudomonas fluorescens Pf-5.</title>
        <authorList>
            <person name="Paulsen I.T."/>
            <person name="Press C.M."/>
            <person name="Ravel J."/>
            <person name="Kobayashi D.Y."/>
            <person name="Myers G.S.A."/>
            <person name="Mavrodi D.V."/>
            <person name="DeBoy R.T."/>
            <person name="Seshadri R."/>
            <person name="Ren Q."/>
            <person name="Madupu R."/>
            <person name="Dodson R.J."/>
            <person name="Durkin A.S."/>
            <person name="Brinkac L.M."/>
            <person name="Daugherty S.C."/>
            <person name="Sullivan S.A."/>
            <person name="Rosovitz M.J."/>
            <person name="Gwinn M.L."/>
            <person name="Zhou L."/>
            <person name="Schneider D.J."/>
            <person name="Cartinhour S.W."/>
            <person name="Nelson W.C."/>
            <person name="Weidman J."/>
            <person name="Watkins K."/>
            <person name="Tran K."/>
            <person name="Khouri H."/>
            <person name="Pierson E.A."/>
            <person name="Pierson L.S. III"/>
            <person name="Thomashow L.S."/>
            <person name="Loper J.E."/>
        </authorList>
    </citation>
    <scope>NUCLEOTIDE SEQUENCE [LARGE SCALE GENOMIC DNA]</scope>
    <source>
        <strain>ATCC BAA-477 / NRRL B-23932 / Pf-5</strain>
    </source>
</reference>
<name>RNT_PSEF5</name>
<proteinExistence type="inferred from homology"/>
<feature type="chain" id="PRO_1000011406" description="Ribonuclease T">
    <location>
        <begin position="1"/>
        <end position="223"/>
    </location>
</feature>
<feature type="domain" description="Exonuclease" evidence="1">
    <location>
        <begin position="31"/>
        <end position="205"/>
    </location>
</feature>
<feature type="region of interest" description="Disordered" evidence="2">
    <location>
        <begin position="1"/>
        <end position="21"/>
    </location>
</feature>
<feature type="compositionally biased region" description="Acidic residues" evidence="2">
    <location>
        <begin position="1"/>
        <end position="11"/>
    </location>
</feature>
<feature type="active site" description="Proton donor/acceptor" evidence="1">
    <location>
        <position position="192"/>
    </location>
</feature>
<feature type="binding site" evidence="1">
    <location>
        <position position="34"/>
    </location>
    <ligand>
        <name>Mg(2+)</name>
        <dbReference type="ChEBI" id="CHEBI:18420"/>
        <label>1</label>
        <note>catalytic</note>
    </ligand>
</feature>
<feature type="binding site" evidence="1">
    <location>
        <position position="34"/>
    </location>
    <ligand>
        <name>Mg(2+)</name>
        <dbReference type="ChEBI" id="CHEBI:18420"/>
        <label>2</label>
        <note>catalytic</note>
    </ligand>
</feature>
<feature type="binding site" evidence="1">
    <location>
        <position position="36"/>
    </location>
    <ligand>
        <name>Mg(2+)</name>
        <dbReference type="ChEBI" id="CHEBI:18420"/>
        <label>2</label>
        <note>catalytic</note>
    </ligand>
</feature>
<feature type="binding site" evidence="1">
    <location>
        <position position="192"/>
    </location>
    <ligand>
        <name>Mg(2+)</name>
        <dbReference type="ChEBI" id="CHEBI:18420"/>
        <label>2</label>
        <note>catalytic</note>
    </ligand>
</feature>
<feature type="binding site" evidence="1">
    <location>
        <position position="197"/>
    </location>
    <ligand>
        <name>Mg(2+)</name>
        <dbReference type="ChEBI" id="CHEBI:18420"/>
        <label>2</label>
        <note>catalytic</note>
    </ligand>
</feature>
<feature type="site" description="Important for substrate binding and specificity" evidence="1">
    <location>
        <position position="40"/>
    </location>
</feature>
<feature type="site" description="Important for substrate binding and specificity" evidence="1">
    <location>
        <position position="88"/>
    </location>
</feature>
<feature type="site" description="Important for substrate binding and specificity" evidence="1">
    <location>
        <position position="135"/>
    </location>
</feature>
<feature type="site" description="Important for substrate binding and specificity" evidence="1">
    <location>
        <position position="157"/>
    </location>
</feature>
<accession>Q4K746</accession>
<dbReference type="EC" id="3.1.13.-" evidence="1"/>
<dbReference type="EMBL" id="CP000076">
    <property type="protein sequence ID" value="AAY94086.1"/>
    <property type="molecule type" value="Genomic_DNA"/>
</dbReference>
<dbReference type="RefSeq" id="WP_011063110.1">
    <property type="nucleotide sequence ID" value="NC_004129.6"/>
</dbReference>
<dbReference type="SMR" id="Q4K746"/>
<dbReference type="STRING" id="220664.PFL_4856"/>
<dbReference type="KEGG" id="pfl:PFL_4856"/>
<dbReference type="PATRIC" id="fig|220664.5.peg.4970"/>
<dbReference type="eggNOG" id="COG0847">
    <property type="taxonomic scope" value="Bacteria"/>
</dbReference>
<dbReference type="HOGENOM" id="CLU_082724_0_0_6"/>
<dbReference type="Proteomes" id="UP000008540">
    <property type="component" value="Chromosome"/>
</dbReference>
<dbReference type="GO" id="GO:0005829">
    <property type="term" value="C:cytosol"/>
    <property type="evidence" value="ECO:0007669"/>
    <property type="project" value="TreeGrafter"/>
</dbReference>
<dbReference type="GO" id="GO:0008408">
    <property type="term" value="F:3'-5' exonuclease activity"/>
    <property type="evidence" value="ECO:0007669"/>
    <property type="project" value="TreeGrafter"/>
</dbReference>
<dbReference type="GO" id="GO:0000287">
    <property type="term" value="F:magnesium ion binding"/>
    <property type="evidence" value="ECO:0007669"/>
    <property type="project" value="UniProtKB-UniRule"/>
</dbReference>
<dbReference type="GO" id="GO:0003676">
    <property type="term" value="F:nucleic acid binding"/>
    <property type="evidence" value="ECO:0007669"/>
    <property type="project" value="InterPro"/>
</dbReference>
<dbReference type="GO" id="GO:0016896">
    <property type="term" value="F:RNA exonuclease activity, producing 5'-phosphomonoesters"/>
    <property type="evidence" value="ECO:0007669"/>
    <property type="project" value="UniProtKB-UniRule"/>
</dbReference>
<dbReference type="GO" id="GO:0045004">
    <property type="term" value="P:DNA replication proofreading"/>
    <property type="evidence" value="ECO:0007669"/>
    <property type="project" value="TreeGrafter"/>
</dbReference>
<dbReference type="GO" id="GO:0008033">
    <property type="term" value="P:tRNA processing"/>
    <property type="evidence" value="ECO:0007669"/>
    <property type="project" value="UniProtKB-KW"/>
</dbReference>
<dbReference type="CDD" id="cd06134">
    <property type="entry name" value="RNaseT"/>
    <property type="match status" value="1"/>
</dbReference>
<dbReference type="FunFam" id="3.30.420.10:FF:000009">
    <property type="entry name" value="Ribonuclease T"/>
    <property type="match status" value="1"/>
</dbReference>
<dbReference type="Gene3D" id="3.30.420.10">
    <property type="entry name" value="Ribonuclease H-like superfamily/Ribonuclease H"/>
    <property type="match status" value="1"/>
</dbReference>
<dbReference type="HAMAP" id="MF_00157">
    <property type="entry name" value="RNase_T"/>
    <property type="match status" value="1"/>
</dbReference>
<dbReference type="InterPro" id="IPR013520">
    <property type="entry name" value="Exonuclease_RNaseT/DNA_pol3"/>
</dbReference>
<dbReference type="InterPro" id="IPR005987">
    <property type="entry name" value="RNase_T"/>
</dbReference>
<dbReference type="InterPro" id="IPR012337">
    <property type="entry name" value="RNaseH-like_sf"/>
</dbReference>
<dbReference type="InterPro" id="IPR036397">
    <property type="entry name" value="RNaseH_sf"/>
</dbReference>
<dbReference type="NCBIfam" id="TIGR01298">
    <property type="entry name" value="RNaseT"/>
    <property type="match status" value="1"/>
</dbReference>
<dbReference type="PANTHER" id="PTHR30231">
    <property type="entry name" value="DNA POLYMERASE III SUBUNIT EPSILON"/>
    <property type="match status" value="1"/>
</dbReference>
<dbReference type="PANTHER" id="PTHR30231:SF2">
    <property type="entry name" value="RIBONUCLEASE T"/>
    <property type="match status" value="1"/>
</dbReference>
<dbReference type="Pfam" id="PF00929">
    <property type="entry name" value="RNase_T"/>
    <property type="match status" value="1"/>
</dbReference>
<dbReference type="SMART" id="SM00479">
    <property type="entry name" value="EXOIII"/>
    <property type="match status" value="1"/>
</dbReference>
<dbReference type="SUPFAM" id="SSF53098">
    <property type="entry name" value="Ribonuclease H-like"/>
    <property type="match status" value="1"/>
</dbReference>
<sequence>MSDDHFDDEQEGSSGGPRHPMAARFRGYLPVVVDVETGGFNSATDALLEIAATTIGMDEKGFVFPEHTYFFRVEPFEGANIEAAALEFTGIKLDHPLRMAVSEETALTDIFRGVRKALKANGCKRAILVGHNSSFDLGFLNAAVARLDMKRNPFHPFSSFDTATLAGLAYGQTVLAKACQSADIDFDGREAHSARYDTEKTAELFCGIVNRWKQMGGWQDFDD</sequence>
<comment type="function">
    <text evidence="1">Trims short 3' overhangs of a variety of RNA species, leaving a one or two nucleotide 3' overhang. Responsible for the end-turnover of tRNA: specifically removes the terminal AMP residue from uncharged tRNA (tRNA-C-C-A). Also appears to be involved in tRNA biosynthesis.</text>
</comment>
<comment type="cofactor">
    <cofactor evidence="1">
        <name>Mg(2+)</name>
        <dbReference type="ChEBI" id="CHEBI:18420"/>
    </cofactor>
    <text evidence="1">Binds two Mg(2+) per subunit. The active form of the enzyme binds two Mg(2+) ions in its active site. The first Mg(2+) forms only one salt bridge with the protein.</text>
</comment>
<comment type="subunit">
    <text evidence="1">Homodimer.</text>
</comment>
<comment type="similarity">
    <text evidence="1">Belongs to the RNase T family.</text>
</comment>
<protein>
    <recommendedName>
        <fullName evidence="1">Ribonuclease T</fullName>
        <ecNumber evidence="1">3.1.13.-</ecNumber>
    </recommendedName>
    <alternativeName>
        <fullName evidence="1">Exoribonuclease T</fullName>
        <shortName evidence="1">RNase T</shortName>
    </alternativeName>
</protein>
<evidence type="ECO:0000255" key="1">
    <source>
        <dbReference type="HAMAP-Rule" id="MF_00157"/>
    </source>
</evidence>
<evidence type="ECO:0000256" key="2">
    <source>
        <dbReference type="SAM" id="MobiDB-lite"/>
    </source>
</evidence>
<gene>
    <name evidence="1" type="primary">rnt</name>
    <name type="ordered locus">PFL_4856</name>
</gene>
<organism>
    <name type="scientific">Pseudomonas fluorescens (strain ATCC BAA-477 / NRRL B-23932 / Pf-5)</name>
    <dbReference type="NCBI Taxonomy" id="220664"/>
    <lineage>
        <taxon>Bacteria</taxon>
        <taxon>Pseudomonadati</taxon>
        <taxon>Pseudomonadota</taxon>
        <taxon>Gammaproteobacteria</taxon>
        <taxon>Pseudomonadales</taxon>
        <taxon>Pseudomonadaceae</taxon>
        <taxon>Pseudomonas</taxon>
    </lineage>
</organism>
<keyword id="KW-0269">Exonuclease</keyword>
<keyword id="KW-0378">Hydrolase</keyword>
<keyword id="KW-0460">Magnesium</keyword>
<keyword id="KW-0479">Metal-binding</keyword>
<keyword id="KW-0540">Nuclease</keyword>
<keyword id="KW-0819">tRNA processing</keyword>